<name>CATA_STAAW</name>
<evidence type="ECO:0000250" key="1"/>
<evidence type="ECO:0000255" key="2">
    <source>
        <dbReference type="PROSITE-ProRule" id="PRU10013"/>
    </source>
</evidence>
<evidence type="ECO:0000256" key="3">
    <source>
        <dbReference type="SAM" id="MobiDB-lite"/>
    </source>
</evidence>
<evidence type="ECO:0000305" key="4"/>
<feature type="chain" id="PRO_0000085003" description="Catalase">
    <location>
        <begin position="1"/>
        <end position="505"/>
    </location>
</feature>
<feature type="region of interest" description="Disordered" evidence="3">
    <location>
        <begin position="1"/>
        <end position="25"/>
    </location>
</feature>
<feature type="active site" evidence="2">
    <location>
        <position position="56"/>
    </location>
</feature>
<feature type="active site" evidence="2">
    <location>
        <position position="129"/>
    </location>
</feature>
<feature type="binding site" description="axial binding residue" evidence="1">
    <location>
        <position position="339"/>
    </location>
    <ligand>
        <name>heme</name>
        <dbReference type="ChEBI" id="CHEBI:30413"/>
    </ligand>
    <ligandPart>
        <name>Fe</name>
        <dbReference type="ChEBI" id="CHEBI:18248"/>
    </ligandPart>
</feature>
<sequence>MSQQDKKLTGVFGHPVSDRENSMTAGPRGPLLMQDIYFLEQMSQFDREVIPERRMHAKGSGAFGTFTVTKDITKYTNAKIFSEIGKQTEMFARFSTVAGERGAADAERDIRGFALKFYTEEGNWDLVGNNTPVFFFRDPKLFVSLNRAVKRDPRTNMRDAQNNWDFWTGLPEALHQVTILMSDRGIPKDLRHMHGFGSHTYSMYNDSGERVWVKFHFRTQQGIENLTDEEAAEIIATDRDSSQRDLFEAIEKGDYPKWTMYIQVMTEEQAKNHKDNPFDLTKVWYHDEYPLIEVGEFELNRNPDNYFMDVEQAAFAPTNIIPGLDFSPDKMLQGRLFSYGDAQRYRLGVNHWQIPVNQPKGVGIENICPFSRDGQMRVVDNNQGGGTHYYPNNHGKFDSQPEYKKPPFPTDGYGYEYNQRQDDDNYFEQPGKLFRLQSEDAKERIFTNTANAMEGVTDDVKRRHIRHCYKADPEYGKGVAKALGIDINSIDLETENDETYENFEK</sequence>
<reference key="1">
    <citation type="journal article" date="2002" name="Lancet">
        <title>Genome and virulence determinants of high virulence community-acquired MRSA.</title>
        <authorList>
            <person name="Baba T."/>
            <person name="Takeuchi F."/>
            <person name="Kuroda M."/>
            <person name="Yuzawa H."/>
            <person name="Aoki K."/>
            <person name="Oguchi A."/>
            <person name="Nagai Y."/>
            <person name="Iwama N."/>
            <person name="Asano K."/>
            <person name="Naimi T."/>
            <person name="Kuroda H."/>
            <person name="Cui L."/>
            <person name="Yamamoto K."/>
            <person name="Hiramatsu K."/>
        </authorList>
    </citation>
    <scope>NUCLEOTIDE SEQUENCE [LARGE SCALE GENOMIC DNA]</scope>
    <source>
        <strain>MW2</strain>
    </source>
</reference>
<organism>
    <name type="scientific">Staphylococcus aureus (strain MW2)</name>
    <dbReference type="NCBI Taxonomy" id="196620"/>
    <lineage>
        <taxon>Bacteria</taxon>
        <taxon>Bacillati</taxon>
        <taxon>Bacillota</taxon>
        <taxon>Bacilli</taxon>
        <taxon>Bacillales</taxon>
        <taxon>Staphylococcaceae</taxon>
        <taxon>Staphylococcus</taxon>
    </lineage>
</organism>
<gene>
    <name type="primary">katA</name>
    <name type="ordered locus">MW1221</name>
</gene>
<dbReference type="EC" id="1.11.1.6"/>
<dbReference type="EMBL" id="BA000033">
    <property type="protein sequence ID" value="BAB95086.1"/>
    <property type="molecule type" value="Genomic_DNA"/>
</dbReference>
<dbReference type="RefSeq" id="WP_000082539.1">
    <property type="nucleotide sequence ID" value="NC_003923.1"/>
</dbReference>
<dbReference type="SMR" id="Q8NWV5"/>
<dbReference type="KEGG" id="sam:MW1221"/>
<dbReference type="HOGENOM" id="CLU_010645_2_0_9"/>
<dbReference type="GO" id="GO:0005737">
    <property type="term" value="C:cytoplasm"/>
    <property type="evidence" value="ECO:0007669"/>
    <property type="project" value="TreeGrafter"/>
</dbReference>
<dbReference type="GO" id="GO:0004096">
    <property type="term" value="F:catalase activity"/>
    <property type="evidence" value="ECO:0007669"/>
    <property type="project" value="UniProtKB-EC"/>
</dbReference>
<dbReference type="GO" id="GO:0020037">
    <property type="term" value="F:heme binding"/>
    <property type="evidence" value="ECO:0007669"/>
    <property type="project" value="InterPro"/>
</dbReference>
<dbReference type="GO" id="GO:0046872">
    <property type="term" value="F:metal ion binding"/>
    <property type="evidence" value="ECO:0007669"/>
    <property type="project" value="UniProtKB-KW"/>
</dbReference>
<dbReference type="GO" id="GO:0042744">
    <property type="term" value="P:hydrogen peroxide catabolic process"/>
    <property type="evidence" value="ECO:0007669"/>
    <property type="project" value="UniProtKB-KW"/>
</dbReference>
<dbReference type="GO" id="GO:0042542">
    <property type="term" value="P:response to hydrogen peroxide"/>
    <property type="evidence" value="ECO:0007669"/>
    <property type="project" value="TreeGrafter"/>
</dbReference>
<dbReference type="CDD" id="cd08156">
    <property type="entry name" value="catalase_clade_3"/>
    <property type="match status" value="1"/>
</dbReference>
<dbReference type="FunFam" id="2.40.180.10:FF:000001">
    <property type="entry name" value="Catalase"/>
    <property type="match status" value="1"/>
</dbReference>
<dbReference type="Gene3D" id="2.40.180.10">
    <property type="entry name" value="Catalase core domain"/>
    <property type="match status" value="1"/>
</dbReference>
<dbReference type="InterPro" id="IPR018028">
    <property type="entry name" value="Catalase"/>
</dbReference>
<dbReference type="InterPro" id="IPR040333">
    <property type="entry name" value="Catalase_3"/>
</dbReference>
<dbReference type="InterPro" id="IPR024708">
    <property type="entry name" value="Catalase_AS"/>
</dbReference>
<dbReference type="InterPro" id="IPR024711">
    <property type="entry name" value="Catalase_clade1/3"/>
</dbReference>
<dbReference type="InterPro" id="IPR011614">
    <property type="entry name" value="Catalase_core"/>
</dbReference>
<dbReference type="InterPro" id="IPR002226">
    <property type="entry name" value="Catalase_haem_BS"/>
</dbReference>
<dbReference type="InterPro" id="IPR010582">
    <property type="entry name" value="Catalase_immune_responsive"/>
</dbReference>
<dbReference type="InterPro" id="IPR020835">
    <property type="entry name" value="Catalase_sf"/>
</dbReference>
<dbReference type="PANTHER" id="PTHR11465">
    <property type="entry name" value="CATALASE"/>
    <property type="match status" value="1"/>
</dbReference>
<dbReference type="PANTHER" id="PTHR11465:SF61">
    <property type="entry name" value="CATALASE"/>
    <property type="match status" value="1"/>
</dbReference>
<dbReference type="Pfam" id="PF00199">
    <property type="entry name" value="Catalase"/>
    <property type="match status" value="1"/>
</dbReference>
<dbReference type="Pfam" id="PF06628">
    <property type="entry name" value="Catalase-rel"/>
    <property type="match status" value="1"/>
</dbReference>
<dbReference type="PIRSF" id="PIRSF038928">
    <property type="entry name" value="Catalase_clade1-3"/>
    <property type="match status" value="1"/>
</dbReference>
<dbReference type="PRINTS" id="PR00067">
    <property type="entry name" value="CATALASE"/>
</dbReference>
<dbReference type="SMART" id="SM01060">
    <property type="entry name" value="Catalase"/>
    <property type="match status" value="1"/>
</dbReference>
<dbReference type="SUPFAM" id="SSF56634">
    <property type="entry name" value="Heme-dependent catalase-like"/>
    <property type="match status" value="1"/>
</dbReference>
<dbReference type="PROSITE" id="PS00437">
    <property type="entry name" value="CATALASE_1"/>
    <property type="match status" value="1"/>
</dbReference>
<dbReference type="PROSITE" id="PS00438">
    <property type="entry name" value="CATALASE_2"/>
    <property type="match status" value="1"/>
</dbReference>
<dbReference type="PROSITE" id="PS51402">
    <property type="entry name" value="CATALASE_3"/>
    <property type="match status" value="1"/>
</dbReference>
<keyword id="KW-0349">Heme</keyword>
<keyword id="KW-0376">Hydrogen peroxide</keyword>
<keyword id="KW-0408">Iron</keyword>
<keyword id="KW-0479">Metal-binding</keyword>
<keyword id="KW-0560">Oxidoreductase</keyword>
<keyword id="KW-0575">Peroxidase</keyword>
<accession>Q8NWV5</accession>
<comment type="function">
    <text evidence="1">Decomposes hydrogen peroxide into water and oxygen; serves to protect cells from the toxic effects of hydrogen peroxide.</text>
</comment>
<comment type="catalytic activity">
    <reaction evidence="2">
        <text>2 H2O2 = O2 + 2 H2O</text>
        <dbReference type="Rhea" id="RHEA:20309"/>
        <dbReference type="ChEBI" id="CHEBI:15377"/>
        <dbReference type="ChEBI" id="CHEBI:15379"/>
        <dbReference type="ChEBI" id="CHEBI:16240"/>
        <dbReference type="EC" id="1.11.1.6"/>
    </reaction>
</comment>
<comment type="cofactor">
    <cofactor evidence="1">
        <name>heme</name>
        <dbReference type="ChEBI" id="CHEBI:30413"/>
    </cofactor>
</comment>
<comment type="subunit">
    <text evidence="1">Homodimer.</text>
</comment>
<comment type="similarity">
    <text evidence="4">Belongs to the catalase family.</text>
</comment>
<protein>
    <recommendedName>
        <fullName>Catalase</fullName>
        <ecNumber>1.11.1.6</ecNumber>
    </recommendedName>
</protein>
<proteinExistence type="inferred from homology"/>